<feature type="chain" id="PRO_0000121500" description="Dolichyl-phosphate-mannose--protein mannosyltransferase 4">
    <location>
        <begin position="1"/>
        <end position="778"/>
    </location>
</feature>
<feature type="transmembrane region" description="Helical" evidence="1">
    <location>
        <begin position="60"/>
        <end position="80"/>
    </location>
</feature>
<feature type="transmembrane region" description="Helical" evidence="1">
    <location>
        <begin position="103"/>
        <end position="123"/>
    </location>
</feature>
<feature type="transmembrane region" description="Helical" evidence="1">
    <location>
        <begin position="145"/>
        <end position="165"/>
    </location>
</feature>
<feature type="transmembrane region" description="Helical" evidence="1">
    <location>
        <begin position="196"/>
        <end position="216"/>
    </location>
</feature>
<feature type="transmembrane region" description="Helical" evidence="1">
    <location>
        <begin position="223"/>
        <end position="243"/>
    </location>
</feature>
<feature type="transmembrane region" description="Helical" evidence="1">
    <location>
        <begin position="248"/>
        <end position="268"/>
    </location>
</feature>
<feature type="transmembrane region" description="Helical" evidence="1">
    <location>
        <begin position="288"/>
        <end position="308"/>
    </location>
</feature>
<feature type="transmembrane region" description="Helical" evidence="1">
    <location>
        <begin position="608"/>
        <end position="628"/>
    </location>
</feature>
<feature type="transmembrane region" description="Helical" evidence="1">
    <location>
        <begin position="644"/>
        <end position="664"/>
    </location>
</feature>
<feature type="transmembrane region" description="Helical" evidence="1">
    <location>
        <begin position="669"/>
        <end position="689"/>
    </location>
</feature>
<feature type="transmembrane region" description="Helical" evidence="1">
    <location>
        <begin position="726"/>
        <end position="746"/>
    </location>
</feature>
<feature type="domain" description="MIR 1" evidence="2">
    <location>
        <begin position="336"/>
        <end position="396"/>
    </location>
</feature>
<feature type="domain" description="MIR 2" evidence="2">
    <location>
        <begin position="408"/>
        <end position="467"/>
    </location>
</feature>
<feature type="domain" description="MIR 3" evidence="2">
    <location>
        <begin position="474"/>
        <end position="529"/>
    </location>
</feature>
<feature type="region of interest" description="Disordered" evidence="3">
    <location>
        <begin position="1"/>
        <end position="44"/>
    </location>
</feature>
<feature type="compositionally biased region" description="Basic and acidic residues" evidence="3">
    <location>
        <begin position="1"/>
        <end position="28"/>
    </location>
</feature>
<feature type="compositionally biased region" description="Polar residues" evidence="3">
    <location>
        <begin position="29"/>
        <end position="41"/>
    </location>
</feature>
<feature type="glycosylation site" description="N-linked (GlcNAc...) asparagine" evidence="1">
    <location>
        <position position="40"/>
    </location>
</feature>
<feature type="glycosylation site" description="N-linked (GlcNAc...) asparagine" evidence="1">
    <location>
        <position position="335"/>
    </location>
</feature>
<organism>
    <name type="scientific">Schizosaccharomyces pombe (strain 972 / ATCC 24843)</name>
    <name type="common">Fission yeast</name>
    <dbReference type="NCBI Taxonomy" id="284812"/>
    <lineage>
        <taxon>Eukaryota</taxon>
        <taxon>Fungi</taxon>
        <taxon>Dikarya</taxon>
        <taxon>Ascomycota</taxon>
        <taxon>Taphrinomycotina</taxon>
        <taxon>Schizosaccharomycetes</taxon>
        <taxon>Schizosaccharomycetales</taxon>
        <taxon>Schizosaccharomycetaceae</taxon>
        <taxon>Schizosaccharomyces</taxon>
    </lineage>
</organism>
<sequence length="778" mass="90091">MASKSEKAVKKAQKLSKEPSVELTDTKSSDNVTPKQKSPNSTEEDVSLNLKTLKAKKFKLAFVLITVLSFITRFWNLNLPGEVVFDEVHFGKFASYYLQGKYFFDLHPPFAKLLLALVAKLAGYDGHYLFDNIGDNYKDNGVPYVTIRAWPALLSSLVPPVVFLIMKESGYDLLACIVSSSLVLFDNAHVTEGRLILLDATLLFSMVCAIYCYVRFFKLRHTPFSRPWWAWLFFTGFFLSCTISTKYVGFFTFLSIGLSVCLELWYLWDIKTGLTVERFFQHFLARFFCLIFFPFLFFLFWFYMHFNILTISGPGDSFMSLEFQETLSDNPITANSTILNYYDIVTIKHMGTNAFLHSHPEKYPIPYDDGRISSGGQQVTGYQFDDENNYWMILPADHYDPPIEAKLNVPVKNMDYIKLHHVGTNTDLMTHDVASPYHPTNEEFTTVSVDESAGKKHEYTLFQVVMSDNTDPQRPLYTKASSFKLIHKLTHVAMWSDPKPLPDWAFKQLEINGAKNIQTGSIFWTFDDIIGLKDSRLKKEKKIPKKLPFWKKYLELQLTMFRQNNMLTEFHPYSSNPSDWFTLHHGIAFWAKSEENKQIYLLGNPIGWWIIAGTVLSTTVVAAAEILLRQRGIRTLPETVRNHFYRSTMFFYMTYVFHYLPFFIMGRQLFLHHYLPAHLAGSLLVGAFIQLACRKSFRSPVSAGVPIPKDVDEKGHSKCHRKYGHVIELICTLLLIFVVIYCFTFFAPMTYGDKSLSVDEWTRRKWLDSWVFQYQKQN</sequence>
<accession>O42933</accession>
<accession>Q9US82</accession>
<keyword id="KW-0256">Endoplasmic reticulum</keyword>
<keyword id="KW-0325">Glycoprotein</keyword>
<keyword id="KW-0328">Glycosyltransferase</keyword>
<keyword id="KW-0472">Membrane</keyword>
<keyword id="KW-1185">Reference proteome</keyword>
<keyword id="KW-0677">Repeat</keyword>
<keyword id="KW-0808">Transferase</keyword>
<keyword id="KW-0812">Transmembrane</keyword>
<keyword id="KW-1133">Transmembrane helix</keyword>
<gene>
    <name type="primary">ogm4</name>
    <name type="synonym">oma4</name>
    <name type="ORF">SPBC16C6.09</name>
</gene>
<name>PMT4_SCHPO</name>
<comment type="function">
    <text evidence="5 6">Transfers mannose from Dol-P-mannose to Ser or Thr residues on proteins. Required for normal cell wall and septum formation.</text>
</comment>
<comment type="catalytic activity">
    <reaction>
        <text>a di-trans,poly-cis-dolichyl beta-D-mannosyl phosphate + L-seryl-[protein] = 3-O-(alpha-D-mannosyl)-L-seryl-[protein] + a di-trans,poly-cis-dolichyl phosphate + H(+)</text>
        <dbReference type="Rhea" id="RHEA:17377"/>
        <dbReference type="Rhea" id="RHEA-COMP:9863"/>
        <dbReference type="Rhea" id="RHEA-COMP:13546"/>
        <dbReference type="Rhea" id="RHEA-COMP:19498"/>
        <dbReference type="Rhea" id="RHEA-COMP:19501"/>
        <dbReference type="ChEBI" id="CHEBI:15378"/>
        <dbReference type="ChEBI" id="CHEBI:29999"/>
        <dbReference type="ChEBI" id="CHEBI:57683"/>
        <dbReference type="ChEBI" id="CHEBI:58211"/>
        <dbReference type="ChEBI" id="CHEBI:137321"/>
        <dbReference type="EC" id="2.4.1.109"/>
    </reaction>
</comment>
<comment type="catalytic activity">
    <reaction>
        <text>a di-trans,poly-cis-dolichyl beta-D-mannosyl phosphate + L-threonyl-[protein] = 3-O-(alpha-D-mannosyl)-L-threonyl-[protein] + a di-trans,poly-cis-dolichyl phosphate + H(+)</text>
        <dbReference type="Rhea" id="RHEA:53396"/>
        <dbReference type="Rhea" id="RHEA-COMP:11060"/>
        <dbReference type="Rhea" id="RHEA-COMP:13547"/>
        <dbReference type="Rhea" id="RHEA-COMP:19498"/>
        <dbReference type="Rhea" id="RHEA-COMP:19501"/>
        <dbReference type="ChEBI" id="CHEBI:15378"/>
        <dbReference type="ChEBI" id="CHEBI:30013"/>
        <dbReference type="ChEBI" id="CHEBI:57683"/>
        <dbReference type="ChEBI" id="CHEBI:58211"/>
        <dbReference type="ChEBI" id="CHEBI:137323"/>
        <dbReference type="EC" id="2.4.1.109"/>
    </reaction>
</comment>
<comment type="pathway">
    <text>Protein modification; protein glycosylation.</text>
</comment>
<comment type="subcellular location">
    <subcellularLocation>
        <location evidence="4 5 7">Endoplasmic reticulum membrane</location>
        <topology evidence="4 5 7">Multi-pass membrane protein</topology>
    </subcellularLocation>
</comment>
<comment type="similarity">
    <text evidence="8">Belongs to the glycosyltransferase 39 family.</text>
</comment>
<protein>
    <recommendedName>
        <fullName>Dolichyl-phosphate-mannose--protein mannosyltransferase 4</fullName>
        <ecNumber>2.4.1.109</ecNumber>
    </recommendedName>
</protein>
<evidence type="ECO:0000255" key="1"/>
<evidence type="ECO:0000255" key="2">
    <source>
        <dbReference type="PROSITE-ProRule" id="PRU00131"/>
    </source>
</evidence>
<evidence type="ECO:0000256" key="3">
    <source>
        <dbReference type="SAM" id="MobiDB-lite"/>
    </source>
</evidence>
<evidence type="ECO:0000269" key="4">
    <source>
    </source>
</evidence>
<evidence type="ECO:0000269" key="5">
    <source>
    </source>
</evidence>
<evidence type="ECO:0000269" key="6">
    <source>
    </source>
</evidence>
<evidence type="ECO:0000269" key="7">
    <source>
    </source>
</evidence>
<evidence type="ECO:0000305" key="8"/>
<reference key="1">
    <citation type="journal article" date="2002" name="Nature">
        <title>The genome sequence of Schizosaccharomyces pombe.</title>
        <authorList>
            <person name="Wood V."/>
            <person name="Gwilliam R."/>
            <person name="Rajandream M.A."/>
            <person name="Lyne M.H."/>
            <person name="Lyne R."/>
            <person name="Stewart A."/>
            <person name="Sgouros J.G."/>
            <person name="Peat N."/>
            <person name="Hayles J."/>
            <person name="Baker S.G."/>
            <person name="Basham D."/>
            <person name="Bowman S."/>
            <person name="Brooks K."/>
            <person name="Brown D."/>
            <person name="Brown S."/>
            <person name="Chillingworth T."/>
            <person name="Churcher C.M."/>
            <person name="Collins M."/>
            <person name="Connor R."/>
            <person name="Cronin A."/>
            <person name="Davis P."/>
            <person name="Feltwell T."/>
            <person name="Fraser A."/>
            <person name="Gentles S."/>
            <person name="Goble A."/>
            <person name="Hamlin N."/>
            <person name="Harris D.E."/>
            <person name="Hidalgo J."/>
            <person name="Hodgson G."/>
            <person name="Holroyd S."/>
            <person name="Hornsby T."/>
            <person name="Howarth S."/>
            <person name="Huckle E.J."/>
            <person name="Hunt S."/>
            <person name="Jagels K."/>
            <person name="James K.D."/>
            <person name="Jones L."/>
            <person name="Jones M."/>
            <person name="Leather S."/>
            <person name="McDonald S."/>
            <person name="McLean J."/>
            <person name="Mooney P."/>
            <person name="Moule S."/>
            <person name="Mungall K.L."/>
            <person name="Murphy L.D."/>
            <person name="Niblett D."/>
            <person name="Odell C."/>
            <person name="Oliver K."/>
            <person name="O'Neil S."/>
            <person name="Pearson D."/>
            <person name="Quail M.A."/>
            <person name="Rabbinowitsch E."/>
            <person name="Rutherford K.M."/>
            <person name="Rutter S."/>
            <person name="Saunders D."/>
            <person name="Seeger K."/>
            <person name="Sharp S."/>
            <person name="Skelton J."/>
            <person name="Simmonds M.N."/>
            <person name="Squares R."/>
            <person name="Squares S."/>
            <person name="Stevens K."/>
            <person name="Taylor K."/>
            <person name="Taylor R.G."/>
            <person name="Tivey A."/>
            <person name="Walsh S.V."/>
            <person name="Warren T."/>
            <person name="Whitehead S."/>
            <person name="Woodward J.R."/>
            <person name="Volckaert G."/>
            <person name="Aert R."/>
            <person name="Robben J."/>
            <person name="Grymonprez B."/>
            <person name="Weltjens I."/>
            <person name="Vanstreels E."/>
            <person name="Rieger M."/>
            <person name="Schaefer M."/>
            <person name="Mueller-Auer S."/>
            <person name="Gabel C."/>
            <person name="Fuchs M."/>
            <person name="Duesterhoeft A."/>
            <person name="Fritzc C."/>
            <person name="Holzer E."/>
            <person name="Moestl D."/>
            <person name="Hilbert H."/>
            <person name="Borzym K."/>
            <person name="Langer I."/>
            <person name="Beck A."/>
            <person name="Lehrach H."/>
            <person name="Reinhardt R."/>
            <person name="Pohl T.M."/>
            <person name="Eger P."/>
            <person name="Zimmermann W."/>
            <person name="Wedler H."/>
            <person name="Wambutt R."/>
            <person name="Purnelle B."/>
            <person name="Goffeau A."/>
            <person name="Cadieu E."/>
            <person name="Dreano S."/>
            <person name="Gloux S."/>
            <person name="Lelaure V."/>
            <person name="Mottier S."/>
            <person name="Galibert F."/>
            <person name="Aves S.J."/>
            <person name="Xiang Z."/>
            <person name="Hunt C."/>
            <person name="Moore K."/>
            <person name="Hurst S.M."/>
            <person name="Lucas M."/>
            <person name="Rochet M."/>
            <person name="Gaillardin C."/>
            <person name="Tallada V.A."/>
            <person name="Garzon A."/>
            <person name="Thode G."/>
            <person name="Daga R.R."/>
            <person name="Cruzado L."/>
            <person name="Jimenez J."/>
            <person name="Sanchez M."/>
            <person name="del Rey F."/>
            <person name="Benito J."/>
            <person name="Dominguez A."/>
            <person name="Revuelta J.L."/>
            <person name="Moreno S."/>
            <person name="Armstrong J."/>
            <person name="Forsburg S.L."/>
            <person name="Cerutti L."/>
            <person name="Lowe T."/>
            <person name="McCombie W.R."/>
            <person name="Paulsen I."/>
            <person name="Potashkin J."/>
            <person name="Shpakovski G.V."/>
            <person name="Ussery D."/>
            <person name="Barrell B.G."/>
            <person name="Nurse P."/>
        </authorList>
    </citation>
    <scope>NUCLEOTIDE SEQUENCE [LARGE SCALE GENOMIC DNA]</scope>
    <source>
        <strain>972 / ATCC 24843</strain>
    </source>
</reference>
<reference key="2">
    <citation type="journal article" date="2000" name="Genes Cells">
        <title>Large-scale screening of intracellular protein localization in living fission yeast cells by the use of a GFP-fusion genomic DNA library.</title>
        <authorList>
            <person name="Ding D.-Q."/>
            <person name="Tomita Y."/>
            <person name="Yamamoto A."/>
            <person name="Chikashige Y."/>
            <person name="Haraguchi T."/>
            <person name="Hiraoka Y."/>
        </authorList>
    </citation>
    <scope>NUCLEOTIDE SEQUENCE [LARGE SCALE GENOMIC DNA] OF 1-105</scope>
    <scope>SUBCELLULAR LOCATION</scope>
    <source>
        <strain>ATCC 38364 / 968</strain>
    </source>
</reference>
<reference key="3">
    <citation type="journal article" date="2005" name="Biochem. Biophys. Res. Commun.">
        <title>Characterization of O-mannosyltransferase family in Schizosaccharomyces pombe.</title>
        <authorList>
            <person name="Tanaka N."/>
            <person name="Fujita Y."/>
            <person name="Suzuki S."/>
            <person name="Morishita M."/>
            <person name="Giga-Hama Y."/>
            <person name="Shimoda C."/>
            <person name="Takegawa K."/>
        </authorList>
    </citation>
    <scope>FUNCTION</scope>
    <scope>SUBCELLULAR LOCATION</scope>
</reference>
<reference key="4">
    <citation type="journal article" date="2005" name="Mol. Microbiol.">
        <title>Protein O-mannosylation is crucial for cell wall integrity, septation and viability in fission yeast.</title>
        <authorList>
            <person name="Willer T."/>
            <person name="Brandl M."/>
            <person name="Sipiczki M."/>
            <person name="Strahl S."/>
        </authorList>
    </citation>
    <scope>FUNCTION</scope>
</reference>
<reference key="5">
    <citation type="journal article" date="2006" name="Nat. Biotechnol.">
        <title>ORFeome cloning and global analysis of protein localization in the fission yeast Schizosaccharomyces pombe.</title>
        <authorList>
            <person name="Matsuyama A."/>
            <person name="Arai R."/>
            <person name="Yashiroda Y."/>
            <person name="Shirai A."/>
            <person name="Kamata A."/>
            <person name="Sekido S."/>
            <person name="Kobayashi Y."/>
            <person name="Hashimoto A."/>
            <person name="Hamamoto M."/>
            <person name="Hiraoka Y."/>
            <person name="Horinouchi S."/>
            <person name="Yoshida M."/>
        </authorList>
    </citation>
    <scope>SUBCELLULAR LOCATION [LARGE SCALE ANALYSIS]</scope>
</reference>
<proteinExistence type="inferred from homology"/>
<dbReference type="EC" id="2.4.1.109"/>
<dbReference type="EMBL" id="CU329671">
    <property type="protein sequence ID" value="CAA16916.1"/>
    <property type="molecule type" value="Genomic_DNA"/>
</dbReference>
<dbReference type="EMBL" id="AB027986">
    <property type="protein sequence ID" value="BAA87290.1"/>
    <property type="molecule type" value="Genomic_DNA"/>
</dbReference>
<dbReference type="PIR" id="T39560">
    <property type="entry name" value="T39560"/>
</dbReference>
<dbReference type="RefSeq" id="NP_596807.1">
    <property type="nucleotide sequence ID" value="NM_001023828.2"/>
</dbReference>
<dbReference type="SMR" id="O42933"/>
<dbReference type="BioGRID" id="276312">
    <property type="interactions" value="4"/>
</dbReference>
<dbReference type="FunCoup" id="O42933">
    <property type="interactions" value="236"/>
</dbReference>
<dbReference type="STRING" id="284812.O42933"/>
<dbReference type="CAZy" id="GT39">
    <property type="family name" value="Glycosyltransferase Family 39"/>
</dbReference>
<dbReference type="GlyCosmos" id="O42933">
    <property type="glycosylation" value="2 sites, No reported glycans"/>
</dbReference>
<dbReference type="iPTMnet" id="O42933"/>
<dbReference type="PaxDb" id="4896-SPBC16C6.09.1"/>
<dbReference type="EnsemblFungi" id="SPBC16C6.09.1">
    <property type="protein sequence ID" value="SPBC16C6.09.1:pep"/>
    <property type="gene ID" value="SPBC16C6.09"/>
</dbReference>
<dbReference type="GeneID" id="2539761"/>
<dbReference type="KEGG" id="spo:2539761"/>
<dbReference type="PomBase" id="SPBC16C6.09">
    <property type="gene designation" value="ogm4"/>
</dbReference>
<dbReference type="VEuPathDB" id="FungiDB:SPBC16C6.09"/>
<dbReference type="eggNOG" id="KOG3359">
    <property type="taxonomic scope" value="Eukaryota"/>
</dbReference>
<dbReference type="HOGENOM" id="CLU_008438_0_0_1"/>
<dbReference type="InParanoid" id="O42933"/>
<dbReference type="OMA" id="NCHLNAP"/>
<dbReference type="PhylomeDB" id="O42933"/>
<dbReference type="BRENDA" id="2.4.1.109">
    <property type="organism ID" value="5613"/>
</dbReference>
<dbReference type="UniPathway" id="UPA00378"/>
<dbReference type="PRO" id="PR:O42933"/>
<dbReference type="Proteomes" id="UP000002485">
    <property type="component" value="Chromosome II"/>
</dbReference>
<dbReference type="GO" id="GO:0012505">
    <property type="term" value="C:endomembrane system"/>
    <property type="evidence" value="ECO:0000314"/>
    <property type="project" value="PomBase"/>
</dbReference>
<dbReference type="GO" id="GO:0005783">
    <property type="term" value="C:endoplasmic reticulum"/>
    <property type="evidence" value="ECO:0007005"/>
    <property type="project" value="PomBase"/>
</dbReference>
<dbReference type="GO" id="GO:0005789">
    <property type="term" value="C:endoplasmic reticulum membrane"/>
    <property type="evidence" value="ECO:0000314"/>
    <property type="project" value="PomBase"/>
</dbReference>
<dbReference type="GO" id="GO:0004169">
    <property type="term" value="F:dolichyl-phosphate-mannose-protein mannosyltransferase activity"/>
    <property type="evidence" value="ECO:0000318"/>
    <property type="project" value="GO_Central"/>
</dbReference>
<dbReference type="GO" id="GO:0016757">
    <property type="term" value="F:glycosyltransferase activity"/>
    <property type="evidence" value="ECO:0000269"/>
    <property type="project" value="PomBase"/>
</dbReference>
<dbReference type="GO" id="GO:0035269">
    <property type="term" value="P:protein O-linked mannosylation"/>
    <property type="evidence" value="ECO:0000318"/>
    <property type="project" value="GO_Central"/>
</dbReference>
<dbReference type="CDD" id="cd23285">
    <property type="entry name" value="beta-trefoil_MIR_PMT4-like"/>
    <property type="match status" value="1"/>
</dbReference>
<dbReference type="Gene3D" id="2.80.10.50">
    <property type="match status" value="1"/>
</dbReference>
<dbReference type="InterPro" id="IPR027005">
    <property type="entry name" value="GlyclTrfase_39-like"/>
</dbReference>
<dbReference type="InterPro" id="IPR003342">
    <property type="entry name" value="Glyco_trans_39/83"/>
</dbReference>
<dbReference type="InterPro" id="IPR036300">
    <property type="entry name" value="MIR_dom_sf"/>
</dbReference>
<dbReference type="InterPro" id="IPR016093">
    <property type="entry name" value="MIR_motif"/>
</dbReference>
<dbReference type="InterPro" id="IPR032421">
    <property type="entry name" value="PMT_4TMC"/>
</dbReference>
<dbReference type="PANTHER" id="PTHR10050">
    <property type="entry name" value="DOLICHYL-PHOSPHATE-MANNOSE--PROTEIN MANNOSYLTRANSFERASE"/>
    <property type="match status" value="1"/>
</dbReference>
<dbReference type="PANTHER" id="PTHR10050:SF51">
    <property type="entry name" value="PROTEIN O-MANNOSYL-TRANSFERASE 1"/>
    <property type="match status" value="1"/>
</dbReference>
<dbReference type="Pfam" id="PF02815">
    <property type="entry name" value="MIR"/>
    <property type="match status" value="1"/>
</dbReference>
<dbReference type="Pfam" id="PF02366">
    <property type="entry name" value="PMT"/>
    <property type="match status" value="1"/>
</dbReference>
<dbReference type="Pfam" id="PF16192">
    <property type="entry name" value="PMT_4TMC"/>
    <property type="match status" value="1"/>
</dbReference>
<dbReference type="SMART" id="SM00472">
    <property type="entry name" value="MIR"/>
    <property type="match status" value="2"/>
</dbReference>
<dbReference type="SUPFAM" id="SSF82109">
    <property type="entry name" value="MIR domain"/>
    <property type="match status" value="1"/>
</dbReference>
<dbReference type="PROSITE" id="PS50919">
    <property type="entry name" value="MIR"/>
    <property type="match status" value="3"/>
</dbReference>